<feature type="chain" id="PRO_1000010563" description="Peptidyl-tRNA hydrolase">
    <location>
        <begin position="1"/>
        <end position="187"/>
    </location>
</feature>
<feature type="active site" description="Proton acceptor" evidence="1">
    <location>
        <position position="20"/>
    </location>
</feature>
<feature type="binding site" evidence="1">
    <location>
        <position position="15"/>
    </location>
    <ligand>
        <name>tRNA</name>
        <dbReference type="ChEBI" id="CHEBI:17843"/>
    </ligand>
</feature>
<feature type="binding site" evidence="1">
    <location>
        <position position="64"/>
    </location>
    <ligand>
        <name>tRNA</name>
        <dbReference type="ChEBI" id="CHEBI:17843"/>
    </ligand>
</feature>
<feature type="binding site" evidence="1">
    <location>
        <position position="66"/>
    </location>
    <ligand>
        <name>tRNA</name>
        <dbReference type="ChEBI" id="CHEBI:17843"/>
    </ligand>
</feature>
<feature type="binding site" evidence="1">
    <location>
        <position position="112"/>
    </location>
    <ligand>
        <name>tRNA</name>
        <dbReference type="ChEBI" id="CHEBI:17843"/>
    </ligand>
</feature>
<feature type="site" description="Discriminates between blocked and unblocked aminoacyl-tRNA" evidence="1">
    <location>
        <position position="10"/>
    </location>
</feature>
<feature type="site" description="Stabilizes the basic form of H active site to accept a proton" evidence="1">
    <location>
        <position position="91"/>
    </location>
</feature>
<accession>A6L6X1</accession>
<comment type="function">
    <text evidence="1">Hydrolyzes ribosome-free peptidyl-tRNAs (with 1 or more amino acids incorporated), which drop off the ribosome during protein synthesis, or as a result of ribosome stalling.</text>
</comment>
<comment type="function">
    <text evidence="1">Catalyzes the release of premature peptidyl moieties from peptidyl-tRNA molecules trapped in stalled 50S ribosomal subunits, and thus maintains levels of free tRNAs and 50S ribosomes.</text>
</comment>
<comment type="catalytic activity">
    <reaction evidence="1">
        <text>an N-acyl-L-alpha-aminoacyl-tRNA + H2O = an N-acyl-L-amino acid + a tRNA + H(+)</text>
        <dbReference type="Rhea" id="RHEA:54448"/>
        <dbReference type="Rhea" id="RHEA-COMP:10123"/>
        <dbReference type="Rhea" id="RHEA-COMP:13883"/>
        <dbReference type="ChEBI" id="CHEBI:15377"/>
        <dbReference type="ChEBI" id="CHEBI:15378"/>
        <dbReference type="ChEBI" id="CHEBI:59874"/>
        <dbReference type="ChEBI" id="CHEBI:78442"/>
        <dbReference type="ChEBI" id="CHEBI:138191"/>
        <dbReference type="EC" id="3.1.1.29"/>
    </reaction>
</comment>
<comment type="subunit">
    <text evidence="1">Monomer.</text>
</comment>
<comment type="subcellular location">
    <subcellularLocation>
        <location evidence="1">Cytoplasm</location>
    </subcellularLocation>
</comment>
<comment type="similarity">
    <text evidence="1">Belongs to the PTH family.</text>
</comment>
<keyword id="KW-0963">Cytoplasm</keyword>
<keyword id="KW-0378">Hydrolase</keyword>
<keyword id="KW-0694">RNA-binding</keyword>
<keyword id="KW-0820">tRNA-binding</keyword>
<name>PTH_PHOV8</name>
<protein>
    <recommendedName>
        <fullName evidence="1">Peptidyl-tRNA hydrolase</fullName>
        <shortName evidence="1">Pth</shortName>
        <ecNumber evidence="1">3.1.1.29</ecNumber>
    </recommendedName>
</protein>
<organism>
    <name type="scientific">Phocaeicola vulgatus (strain ATCC 8482 / DSM 1447 / JCM 5826 / CCUG 4940 / NBRC 14291 / NCTC 11154)</name>
    <name type="common">Bacteroides vulgatus</name>
    <dbReference type="NCBI Taxonomy" id="435590"/>
    <lineage>
        <taxon>Bacteria</taxon>
        <taxon>Pseudomonadati</taxon>
        <taxon>Bacteroidota</taxon>
        <taxon>Bacteroidia</taxon>
        <taxon>Bacteroidales</taxon>
        <taxon>Bacteroidaceae</taxon>
        <taxon>Phocaeicola</taxon>
    </lineage>
</organism>
<reference key="1">
    <citation type="journal article" date="2007" name="PLoS Biol.">
        <title>Evolution of symbiotic bacteria in the distal human intestine.</title>
        <authorList>
            <person name="Xu J."/>
            <person name="Mahowald M.A."/>
            <person name="Ley R.E."/>
            <person name="Lozupone C.A."/>
            <person name="Hamady M."/>
            <person name="Martens E.C."/>
            <person name="Henrissat B."/>
            <person name="Coutinho P.M."/>
            <person name="Minx P."/>
            <person name="Latreille P."/>
            <person name="Cordum H."/>
            <person name="Van Brunt A."/>
            <person name="Kim K."/>
            <person name="Fulton R.S."/>
            <person name="Fulton L.A."/>
            <person name="Clifton S.W."/>
            <person name="Wilson R.K."/>
            <person name="Knight R.D."/>
            <person name="Gordon J.I."/>
        </authorList>
    </citation>
    <scope>NUCLEOTIDE SEQUENCE [LARGE SCALE GENOMIC DNA]</scope>
    <source>
        <strain>ATCC 8482 / DSM 1447 / JCM 5826 / CCUG 4940 / NBRC 14291 / NCTC 11154</strain>
    </source>
</reference>
<evidence type="ECO:0000255" key="1">
    <source>
        <dbReference type="HAMAP-Rule" id="MF_00083"/>
    </source>
</evidence>
<sequence length="187" mass="20617">MKYLITGLGNIGEEYRNTRHNIGFTVLDALAKASNLVFTDGRYGATATLSLKGRQLILLKPSTYMNLSGNAVRYWMQKENIPLENVLIVVDDLALPFGTLRLKGKGSDAGHNGLKHIAATLGTQDYARLRFGIGNDFPRGGQIDFVLGHFTDEDLKTMDERVATACDIIKSFCLAGISITMNQYNKK</sequence>
<gene>
    <name evidence="1" type="primary">pth</name>
    <name type="ordered locus">BVU_3824</name>
</gene>
<dbReference type="EC" id="3.1.1.29" evidence="1"/>
<dbReference type="EMBL" id="CP000139">
    <property type="protein sequence ID" value="ABR41435.1"/>
    <property type="molecule type" value="Genomic_DNA"/>
</dbReference>
<dbReference type="RefSeq" id="WP_005841628.1">
    <property type="nucleotide sequence ID" value="NZ_JANSWM010000023.1"/>
</dbReference>
<dbReference type="SMR" id="A6L6X1"/>
<dbReference type="STRING" id="435590.BVU_3824"/>
<dbReference type="PaxDb" id="435590-BVU_3824"/>
<dbReference type="GeneID" id="5304783"/>
<dbReference type="KEGG" id="bvu:BVU_3824"/>
<dbReference type="eggNOG" id="COG0193">
    <property type="taxonomic scope" value="Bacteria"/>
</dbReference>
<dbReference type="HOGENOM" id="CLU_062456_4_1_10"/>
<dbReference type="BioCyc" id="BVUL435590:G1G59-3960-MONOMER"/>
<dbReference type="Proteomes" id="UP000002861">
    <property type="component" value="Chromosome"/>
</dbReference>
<dbReference type="GO" id="GO:0005737">
    <property type="term" value="C:cytoplasm"/>
    <property type="evidence" value="ECO:0007669"/>
    <property type="project" value="UniProtKB-SubCell"/>
</dbReference>
<dbReference type="GO" id="GO:0004045">
    <property type="term" value="F:peptidyl-tRNA hydrolase activity"/>
    <property type="evidence" value="ECO:0007669"/>
    <property type="project" value="UniProtKB-UniRule"/>
</dbReference>
<dbReference type="GO" id="GO:0000049">
    <property type="term" value="F:tRNA binding"/>
    <property type="evidence" value="ECO:0007669"/>
    <property type="project" value="UniProtKB-UniRule"/>
</dbReference>
<dbReference type="GO" id="GO:0006515">
    <property type="term" value="P:protein quality control for misfolded or incompletely synthesized proteins"/>
    <property type="evidence" value="ECO:0007669"/>
    <property type="project" value="UniProtKB-UniRule"/>
</dbReference>
<dbReference type="GO" id="GO:0072344">
    <property type="term" value="P:rescue of stalled ribosome"/>
    <property type="evidence" value="ECO:0007669"/>
    <property type="project" value="UniProtKB-UniRule"/>
</dbReference>
<dbReference type="CDD" id="cd00462">
    <property type="entry name" value="PTH"/>
    <property type="match status" value="1"/>
</dbReference>
<dbReference type="FunFam" id="3.40.50.1470:FF:000001">
    <property type="entry name" value="Peptidyl-tRNA hydrolase"/>
    <property type="match status" value="1"/>
</dbReference>
<dbReference type="Gene3D" id="3.40.50.1470">
    <property type="entry name" value="Peptidyl-tRNA hydrolase"/>
    <property type="match status" value="1"/>
</dbReference>
<dbReference type="HAMAP" id="MF_00083">
    <property type="entry name" value="Pept_tRNA_hydro_bact"/>
    <property type="match status" value="1"/>
</dbReference>
<dbReference type="InterPro" id="IPR001328">
    <property type="entry name" value="Pept_tRNA_hydro"/>
</dbReference>
<dbReference type="InterPro" id="IPR018171">
    <property type="entry name" value="Pept_tRNA_hydro_CS"/>
</dbReference>
<dbReference type="InterPro" id="IPR036416">
    <property type="entry name" value="Pept_tRNA_hydro_sf"/>
</dbReference>
<dbReference type="NCBIfam" id="TIGR00447">
    <property type="entry name" value="pth"/>
    <property type="match status" value="1"/>
</dbReference>
<dbReference type="PANTHER" id="PTHR17224">
    <property type="entry name" value="PEPTIDYL-TRNA HYDROLASE"/>
    <property type="match status" value="1"/>
</dbReference>
<dbReference type="PANTHER" id="PTHR17224:SF1">
    <property type="entry name" value="PEPTIDYL-TRNA HYDROLASE"/>
    <property type="match status" value="1"/>
</dbReference>
<dbReference type="Pfam" id="PF01195">
    <property type="entry name" value="Pept_tRNA_hydro"/>
    <property type="match status" value="1"/>
</dbReference>
<dbReference type="SUPFAM" id="SSF53178">
    <property type="entry name" value="Peptidyl-tRNA hydrolase-like"/>
    <property type="match status" value="1"/>
</dbReference>
<dbReference type="PROSITE" id="PS01195">
    <property type="entry name" value="PEPT_TRNA_HYDROL_1"/>
    <property type="match status" value="1"/>
</dbReference>
<proteinExistence type="inferred from homology"/>